<evidence type="ECO:0000250" key="1">
    <source>
        <dbReference type="UniProtKB" id="P23083"/>
    </source>
</evidence>
<evidence type="ECO:0000255" key="2"/>
<evidence type="ECO:0000255" key="3">
    <source>
        <dbReference type="PROSITE-ProRule" id="PRU00114"/>
    </source>
</evidence>
<evidence type="ECO:0000303" key="4">
    <source>
    </source>
</evidence>
<evidence type="ECO:0000303" key="5">
    <source>
    </source>
</evidence>
<evidence type="ECO:0000303" key="6">
    <source>
    </source>
</evidence>
<evidence type="ECO:0000303" key="7">
    <source>
    </source>
</evidence>
<evidence type="ECO:0000303" key="8">
    <source>
    </source>
</evidence>
<evidence type="ECO:0000303" key="9">
    <source ref="3"/>
</evidence>
<evidence type="ECO:0000305" key="10"/>
<name>HV372_HUMAN</name>
<accession>A0A0B4J1Y9</accession>
<accession>A0A087WW89</accession>
<dbReference type="EMBL" id="AC245023">
    <property type="status" value="NOT_ANNOTATED_CDS"/>
    <property type="molecule type" value="Genomic_DNA"/>
</dbReference>
<dbReference type="EMDB" id="EMD-13869"/>
<dbReference type="EMDB" id="EMD-15971"/>
<dbReference type="EMDB" id="EMD-22497"/>
<dbReference type="EMDB" id="EMD-24075"/>
<dbReference type="EMDB" id="EMD-27763"/>
<dbReference type="EMDB" id="EMD-36788"/>
<dbReference type="EMDB" id="EMD-36789"/>
<dbReference type="EMDB" id="EMD-38560"/>
<dbReference type="EMDB" id="EMD-38563"/>
<dbReference type="EMDB" id="EMD-38564"/>
<dbReference type="EMDB" id="EMD-39685"/>
<dbReference type="EMDB" id="EMD-39686"/>
<dbReference type="SMR" id="A0A0B4J1Y9"/>
<dbReference type="FunCoup" id="A0A0B4J1Y9">
    <property type="interactions" value="278"/>
</dbReference>
<dbReference type="IntAct" id="A0A0B4J1Y9">
    <property type="interactions" value="3"/>
</dbReference>
<dbReference type="STRING" id="9606.ENSP00000480035"/>
<dbReference type="IMGT_GENE-DB" id="IGHV3-72"/>
<dbReference type="BioMuta" id="IGHV3-72"/>
<dbReference type="jPOST" id="A0A0B4J1Y9"/>
<dbReference type="MassIVE" id="A0A0B4J1Y9"/>
<dbReference type="Ensembl" id="ENST00000433072.2">
    <property type="protein sequence ID" value="ENSP00000416201.2"/>
    <property type="gene ID" value="ENSG00000225698.4"/>
</dbReference>
<dbReference type="Ensembl" id="ENST00000633602.1">
    <property type="protein sequence ID" value="ENSP00000488019.1"/>
    <property type="gene ID" value="ENSG00000278042.2"/>
</dbReference>
<dbReference type="UCSC" id="uc059ghh.1">
    <property type="organism name" value="human"/>
</dbReference>
<dbReference type="AGR" id="HGNC:5622"/>
<dbReference type="GeneCards" id="IGHV3-72"/>
<dbReference type="HGNC" id="HGNC:5622">
    <property type="gene designation" value="IGHV3-72"/>
</dbReference>
<dbReference type="HPA" id="ENSG00000225698">
    <property type="expression patterns" value="Tissue enhanced (intestine, urinary bladder)"/>
</dbReference>
<dbReference type="neXtProt" id="NX_A0A0B4J1Y9"/>
<dbReference type="OpenTargets" id="ENSG00000225698"/>
<dbReference type="VEuPathDB" id="HostDB:ENSG00000225698"/>
<dbReference type="GeneTree" id="ENSGT01050000244871"/>
<dbReference type="InParanoid" id="A0A0B4J1Y9"/>
<dbReference type="OMA" id="EWVGVIR"/>
<dbReference type="OrthoDB" id="9945861at2759"/>
<dbReference type="PAN-GO" id="A0A0B4J1Y9">
    <property type="GO annotations" value="11 GO annotations based on evolutionary models"/>
</dbReference>
<dbReference type="PhylomeDB" id="A0A0B4J1Y9"/>
<dbReference type="SignaLink" id="A0A0B4J1Y9"/>
<dbReference type="ChiTaRS" id="IGHV3-72">
    <property type="organism name" value="human"/>
</dbReference>
<dbReference type="Pharos" id="A0A0B4J1Y9">
    <property type="development level" value="Tdark"/>
</dbReference>
<dbReference type="PRO" id="PR:A0A0B4J1Y9"/>
<dbReference type="Proteomes" id="UP000005640">
    <property type="component" value="Chromosome 14"/>
</dbReference>
<dbReference type="RNAct" id="A0A0B4J1Y9">
    <property type="molecule type" value="protein"/>
</dbReference>
<dbReference type="Bgee" id="ENSG00000225698">
    <property type="expression patterns" value="Expressed in duodenum and 86 other cell types or tissues"/>
</dbReference>
<dbReference type="GO" id="GO:0005576">
    <property type="term" value="C:extracellular region"/>
    <property type="evidence" value="ECO:0007669"/>
    <property type="project" value="UniProtKB-SubCell"/>
</dbReference>
<dbReference type="GO" id="GO:0019814">
    <property type="term" value="C:immunoglobulin complex"/>
    <property type="evidence" value="ECO:0007669"/>
    <property type="project" value="UniProtKB-KW"/>
</dbReference>
<dbReference type="GO" id="GO:0005886">
    <property type="term" value="C:plasma membrane"/>
    <property type="evidence" value="ECO:0007669"/>
    <property type="project" value="UniProtKB-SubCell"/>
</dbReference>
<dbReference type="GO" id="GO:0003823">
    <property type="term" value="F:antigen binding"/>
    <property type="evidence" value="ECO:0000318"/>
    <property type="project" value="GO_Central"/>
</dbReference>
<dbReference type="GO" id="GO:0016064">
    <property type="term" value="P:immunoglobulin mediated immune response"/>
    <property type="evidence" value="ECO:0000318"/>
    <property type="project" value="GO_Central"/>
</dbReference>
<dbReference type="FunFam" id="2.60.40.10:FF:002098">
    <property type="entry name" value="Immunoglobulin heavy variable 3-72"/>
    <property type="match status" value="1"/>
</dbReference>
<dbReference type="Gene3D" id="2.60.40.10">
    <property type="entry name" value="Immunoglobulins"/>
    <property type="match status" value="1"/>
</dbReference>
<dbReference type="InterPro" id="IPR007110">
    <property type="entry name" value="Ig-like_dom"/>
</dbReference>
<dbReference type="InterPro" id="IPR036179">
    <property type="entry name" value="Ig-like_dom_sf"/>
</dbReference>
<dbReference type="InterPro" id="IPR013783">
    <property type="entry name" value="Ig-like_fold"/>
</dbReference>
<dbReference type="InterPro" id="IPR013106">
    <property type="entry name" value="Ig_V-set"/>
</dbReference>
<dbReference type="InterPro" id="IPR050199">
    <property type="entry name" value="IgHV"/>
</dbReference>
<dbReference type="PANTHER" id="PTHR23266">
    <property type="entry name" value="IMMUNOGLOBULIN HEAVY CHAIN"/>
    <property type="match status" value="1"/>
</dbReference>
<dbReference type="Pfam" id="PF07686">
    <property type="entry name" value="V-set"/>
    <property type="match status" value="1"/>
</dbReference>
<dbReference type="SMART" id="SM00406">
    <property type="entry name" value="IGv"/>
    <property type="match status" value="1"/>
</dbReference>
<dbReference type="SUPFAM" id="SSF48726">
    <property type="entry name" value="Immunoglobulin"/>
    <property type="match status" value="1"/>
</dbReference>
<dbReference type="PROSITE" id="PS50835">
    <property type="entry name" value="IG_LIKE"/>
    <property type="match status" value="1"/>
</dbReference>
<comment type="function">
    <text evidence="5 6 7 8">V region of the variable domain of immunoglobulin heavy chains that participates in the antigen recognition (PubMed:24600447). Immunoglobulins, also known as antibodies, are membrane-bound or secreted glycoproteins produced by B lymphocytes. In the recognition phase of humoral immunity, the membrane-bound immunoglobulins serve as receptors which, upon binding of a specific antigen, trigger the clonal expansion and differentiation of B lymphocytes into immunoglobulins-secreting plasma cells. Secreted immunoglobulins mediate the effector phase of humoral immunity, which results in the elimination of bound antigens (PubMed:20176268, PubMed:22158414). The antigen binding site is formed by the variable domain of one heavy chain, together with that of its associated light chain. Thus, each immunoglobulin has two antigen binding sites with remarkable affinity for a particular antigen. The variable domains are assembled by a process called V-(D)-J rearrangement and can then be subjected to somatic hypermutations which, after exposure to antigen and selection, allow affinity maturation for a particular antigen (PubMed:17576170, PubMed:20176268).</text>
</comment>
<comment type="subunit">
    <text evidence="6">Immunoglobulins are composed of two identical heavy chains and two identical light chains; disulfide-linked.</text>
</comment>
<comment type="subcellular location">
    <subcellularLocation>
        <location evidence="6 7">Secreted</location>
    </subcellularLocation>
    <subcellularLocation>
        <location evidence="6 7">Cell membrane</location>
    </subcellularLocation>
</comment>
<comment type="polymorphism">
    <text evidence="10">There are several alleles. The sequence shown is that of IMGT allele IGHV3-72*01.</text>
</comment>
<comment type="caution">
    <text evidence="10">For examples of full-length immunoglobulin heavy chains (of different isotypes) see AC P0DOX2, AC P0DOX3, AC P0DOX4, AC P0DOX5 and AC P0DOX6.</text>
</comment>
<feature type="signal peptide" evidence="2">
    <location>
        <begin position="1"/>
        <end position="19"/>
    </location>
</feature>
<feature type="chain" id="PRO_5007762597" description="Immunoglobulin heavy variable 3-72" evidence="2">
    <location>
        <begin position="20"/>
        <end position="119"/>
    </location>
</feature>
<feature type="domain" description="Ig-like" evidence="3">
    <location>
        <begin position="20"/>
        <end position="119" status="greater than"/>
    </location>
</feature>
<feature type="region of interest" description="Framework-1" evidence="1">
    <location>
        <begin position="20"/>
        <end position="44"/>
    </location>
</feature>
<feature type="region of interest" description="Complementarity-determining-1" evidence="1">
    <location>
        <begin position="45"/>
        <end position="52"/>
    </location>
</feature>
<feature type="region of interest" description="Framework-2" evidence="1">
    <location>
        <begin position="53"/>
        <end position="69"/>
    </location>
</feature>
<feature type="region of interest" description="Complementarity-determining-2" evidence="1">
    <location>
        <begin position="70"/>
        <end position="79"/>
    </location>
</feature>
<feature type="region of interest" description="Framework-3" evidence="1">
    <location>
        <begin position="80"/>
        <end position="117"/>
    </location>
</feature>
<feature type="region of interest" description="Complementarity-determining-3" evidence="1">
    <location>
        <begin position="118"/>
        <end position="119" status="greater than"/>
    </location>
</feature>
<feature type="disulfide bond" evidence="3">
    <location>
        <begin position="41"/>
        <end position="117"/>
    </location>
</feature>
<feature type="non-terminal residue">
    <location>
        <position position="119"/>
    </location>
</feature>
<gene>
    <name evidence="4 9" type="primary">IGHV3-72</name>
</gene>
<sequence length="119" mass="13203">MEFGLSWVFLVVILQGVQCEVQLVESGGGLVQPGGSLRLSCAASGFTFSDHYMDWVRQAPGKGLEWVGRTRNKANSYTTEYAASVKGRFTISRDDSKNSLYLQMNSLKTEDTAVYYCAR</sequence>
<reference key="1">
    <citation type="journal article" date="2003" name="Nature">
        <title>The DNA sequence and analysis of human chromosome 14.</title>
        <authorList>
            <person name="Heilig R."/>
            <person name="Eckenberg R."/>
            <person name="Petit J.-L."/>
            <person name="Fonknechten N."/>
            <person name="Da Silva C."/>
            <person name="Cattolico L."/>
            <person name="Levy M."/>
            <person name="Barbe V."/>
            <person name="De Berardinis V."/>
            <person name="Ureta-Vidal A."/>
            <person name="Pelletier E."/>
            <person name="Vico V."/>
            <person name="Anthouard V."/>
            <person name="Rowen L."/>
            <person name="Madan A."/>
            <person name="Qin S."/>
            <person name="Sun H."/>
            <person name="Du H."/>
            <person name="Pepin K."/>
            <person name="Artiguenave F."/>
            <person name="Robert C."/>
            <person name="Cruaud C."/>
            <person name="Bruels T."/>
            <person name="Jaillon O."/>
            <person name="Friedlander L."/>
            <person name="Samson G."/>
            <person name="Brottier P."/>
            <person name="Cure S."/>
            <person name="Segurens B."/>
            <person name="Aniere F."/>
            <person name="Samain S."/>
            <person name="Crespeau H."/>
            <person name="Abbasi N."/>
            <person name="Aiach N."/>
            <person name="Boscus D."/>
            <person name="Dickhoff R."/>
            <person name="Dors M."/>
            <person name="Dubois I."/>
            <person name="Friedman C."/>
            <person name="Gouyvenoux M."/>
            <person name="James R."/>
            <person name="Madan A."/>
            <person name="Mairey-Estrada B."/>
            <person name="Mangenot S."/>
            <person name="Martins N."/>
            <person name="Menard M."/>
            <person name="Oztas S."/>
            <person name="Ratcliffe A."/>
            <person name="Shaffer T."/>
            <person name="Trask B."/>
            <person name="Vacherie B."/>
            <person name="Bellemere C."/>
            <person name="Belser C."/>
            <person name="Besnard-Gonnet M."/>
            <person name="Bartol-Mavel D."/>
            <person name="Boutard M."/>
            <person name="Briez-Silla S."/>
            <person name="Combette S."/>
            <person name="Dufosse-Laurent V."/>
            <person name="Ferron C."/>
            <person name="Lechaplais C."/>
            <person name="Louesse C."/>
            <person name="Muselet D."/>
            <person name="Magdelenat G."/>
            <person name="Pateau E."/>
            <person name="Petit E."/>
            <person name="Sirvain-Trukniewicz P."/>
            <person name="Trybou A."/>
            <person name="Vega-Czarny N."/>
            <person name="Bataille E."/>
            <person name="Bluet E."/>
            <person name="Bordelais I."/>
            <person name="Dubois M."/>
            <person name="Dumont C."/>
            <person name="Guerin T."/>
            <person name="Haffray S."/>
            <person name="Hammadi R."/>
            <person name="Muanga J."/>
            <person name="Pellouin V."/>
            <person name="Robert D."/>
            <person name="Wunderle E."/>
            <person name="Gauguet G."/>
            <person name="Roy A."/>
            <person name="Sainte-Marthe L."/>
            <person name="Verdier J."/>
            <person name="Verdier-Discala C."/>
            <person name="Hillier L.W."/>
            <person name="Fulton L."/>
            <person name="McPherson J."/>
            <person name="Matsuda F."/>
            <person name="Wilson R."/>
            <person name="Scarpelli C."/>
            <person name="Gyapay G."/>
            <person name="Wincker P."/>
            <person name="Saurin W."/>
            <person name="Quetier F."/>
            <person name="Waterston R."/>
            <person name="Hood L."/>
            <person name="Weissenbach J."/>
        </authorList>
    </citation>
    <scope>NUCLEOTIDE SEQUENCE [LARGE SCALE GENOMIC DNA] (IMGT ALLELE IGHV3-72*01)</scope>
</reference>
<reference key="2">
    <citation type="journal article" date="2001" name="Exp. Clin. Immunogenet.">
        <title>Nomenclature of the human immunoglobulin heavy (IGH) genes.</title>
        <authorList>
            <person name="Lefranc M.P."/>
        </authorList>
    </citation>
    <scope>NOMENCLATURE</scope>
</reference>
<reference key="3">
    <citation type="book" date="2001" name="The Immunoglobulin FactsBook.">
        <title>The Immunoglobulin FactsBook.</title>
        <editorList>
            <person name="Lefranc M.P."/>
            <person name="Lefranc G."/>
        </editorList>
        <authorList>
            <person name="Lefranc M.P."/>
            <person name="Lefranc G."/>
        </authorList>
    </citation>
    <scope>NOMENCLATURE</scope>
</reference>
<reference key="4">
    <citation type="journal article" date="2007" name="Annu. Rev. Genet.">
        <title>Immunoglobulin somatic hypermutation.</title>
        <authorList>
            <person name="Teng G."/>
            <person name="Papavasiliou F.N."/>
        </authorList>
    </citation>
    <scope>REVIEW ON SOMATIC HYPERMUTATION</scope>
</reference>
<reference key="5">
    <citation type="journal article" date="2010" name="J. Allergy Clin. Immunol.">
        <title>Structure and function of immunoglobulins.</title>
        <authorList>
            <person name="Schroeder H.W. Jr."/>
            <person name="Cavacini L."/>
        </authorList>
    </citation>
    <scope>REVIEW ON IMMUNOGLOBULINS</scope>
</reference>
<reference key="6">
    <citation type="journal article" date="2012" name="Nat. Rev. Immunol.">
        <title>Molecular programming of B cell memory.</title>
        <authorList>
            <person name="McHeyzer-Williams M."/>
            <person name="Okitsu S."/>
            <person name="Wang N."/>
            <person name="McHeyzer-Williams L."/>
        </authorList>
    </citation>
    <scope>REVIEW ON FUNCTION</scope>
</reference>
<reference key="7">
    <citation type="journal article" date="2014" name="Front. Immunol.">
        <title>Immunoglobulin and T Cell Receptor Genes: IMGT((R)) and the Birth and Rise of Immunoinformatics.</title>
        <authorList>
            <person name="Lefranc M.P."/>
        </authorList>
    </citation>
    <scope>NOMENCLATURE</scope>
</reference>
<keyword id="KW-1064">Adaptive immunity</keyword>
<keyword id="KW-1003">Cell membrane</keyword>
<keyword id="KW-1015">Disulfide bond</keyword>
<keyword id="KW-0391">Immunity</keyword>
<keyword id="KW-1280">Immunoglobulin</keyword>
<keyword id="KW-0393">Immunoglobulin domain</keyword>
<keyword id="KW-0472">Membrane</keyword>
<keyword id="KW-1267">Proteomics identification</keyword>
<keyword id="KW-1185">Reference proteome</keyword>
<keyword id="KW-0964">Secreted</keyword>
<keyword id="KW-0732">Signal</keyword>
<organism>
    <name type="scientific">Homo sapiens</name>
    <name type="common">Human</name>
    <dbReference type="NCBI Taxonomy" id="9606"/>
    <lineage>
        <taxon>Eukaryota</taxon>
        <taxon>Metazoa</taxon>
        <taxon>Chordata</taxon>
        <taxon>Craniata</taxon>
        <taxon>Vertebrata</taxon>
        <taxon>Euteleostomi</taxon>
        <taxon>Mammalia</taxon>
        <taxon>Eutheria</taxon>
        <taxon>Euarchontoglires</taxon>
        <taxon>Primates</taxon>
        <taxon>Haplorrhini</taxon>
        <taxon>Catarrhini</taxon>
        <taxon>Hominidae</taxon>
        <taxon>Homo</taxon>
    </lineage>
</organism>
<proteinExistence type="evidence at protein level"/>
<protein>
    <recommendedName>
        <fullName evidence="4 9">Immunoglobulin heavy variable 3-72</fullName>
    </recommendedName>
</protein>